<protein>
    <recommendedName>
        <fullName>D-3-phosphoglycerate dehydrogenase</fullName>
        <shortName>PGDH</shortName>
        <ecNumber>1.1.1.95</ecNumber>
    </recommendedName>
</protein>
<name>SERA_METJA</name>
<dbReference type="EC" id="1.1.1.95"/>
<dbReference type="EMBL" id="L77117">
    <property type="protein sequence ID" value="AAB99020.1"/>
    <property type="molecule type" value="Genomic_DNA"/>
</dbReference>
<dbReference type="PIR" id="A64427">
    <property type="entry name" value="A64427"/>
</dbReference>
<dbReference type="RefSeq" id="WP_010870531.1">
    <property type="nucleotide sequence ID" value="NC_000909.1"/>
</dbReference>
<dbReference type="SMR" id="Q58424"/>
<dbReference type="FunCoup" id="Q58424">
    <property type="interactions" value="224"/>
</dbReference>
<dbReference type="STRING" id="243232.MJ_1018"/>
<dbReference type="PaxDb" id="243232-MJ_1018"/>
<dbReference type="EnsemblBacteria" id="AAB99020">
    <property type="protein sequence ID" value="AAB99020"/>
    <property type="gene ID" value="MJ_1018"/>
</dbReference>
<dbReference type="GeneID" id="1451915"/>
<dbReference type="KEGG" id="mja:MJ_1018"/>
<dbReference type="eggNOG" id="arCOG01754">
    <property type="taxonomic scope" value="Archaea"/>
</dbReference>
<dbReference type="HOGENOM" id="CLU_019796_8_1_2"/>
<dbReference type="InParanoid" id="Q58424"/>
<dbReference type="OrthoDB" id="7437at2157"/>
<dbReference type="PhylomeDB" id="Q58424"/>
<dbReference type="UniPathway" id="UPA00135">
    <property type="reaction ID" value="UER00196"/>
</dbReference>
<dbReference type="Proteomes" id="UP000000805">
    <property type="component" value="Chromosome"/>
</dbReference>
<dbReference type="GO" id="GO:0051287">
    <property type="term" value="F:NAD binding"/>
    <property type="evidence" value="ECO:0007669"/>
    <property type="project" value="InterPro"/>
</dbReference>
<dbReference type="GO" id="GO:0004617">
    <property type="term" value="F:phosphoglycerate dehydrogenase activity"/>
    <property type="evidence" value="ECO:0000318"/>
    <property type="project" value="GO_Central"/>
</dbReference>
<dbReference type="GO" id="GO:0006564">
    <property type="term" value="P:L-serine biosynthetic process"/>
    <property type="evidence" value="ECO:0000318"/>
    <property type="project" value="GO_Central"/>
</dbReference>
<dbReference type="CDD" id="cd04902">
    <property type="entry name" value="ACT_3PGDH-xct"/>
    <property type="match status" value="1"/>
</dbReference>
<dbReference type="CDD" id="cd12173">
    <property type="entry name" value="PGDH_4"/>
    <property type="match status" value="1"/>
</dbReference>
<dbReference type="FunFam" id="3.30.1330.90:FF:000003">
    <property type="entry name" value="D-3-phosphoglycerate dehydrogenase"/>
    <property type="match status" value="1"/>
</dbReference>
<dbReference type="FunFam" id="3.40.50.720:FF:000021">
    <property type="entry name" value="D-3-phosphoglycerate dehydrogenase"/>
    <property type="match status" value="1"/>
</dbReference>
<dbReference type="FunFam" id="3.30.70.260:FF:000008">
    <property type="entry name" value="D-3-phosphoglycerate dehydrogenase, chloroplastic"/>
    <property type="match status" value="1"/>
</dbReference>
<dbReference type="Gene3D" id="3.30.70.260">
    <property type="match status" value="1"/>
</dbReference>
<dbReference type="Gene3D" id="3.30.1330.90">
    <property type="entry name" value="D-3-phosphoglycerate dehydrogenase, domain 3"/>
    <property type="match status" value="1"/>
</dbReference>
<dbReference type="Gene3D" id="3.40.50.720">
    <property type="entry name" value="NAD(P)-binding Rossmann-like Domain"/>
    <property type="match status" value="2"/>
</dbReference>
<dbReference type="InterPro" id="IPR045865">
    <property type="entry name" value="ACT-like_dom_sf"/>
</dbReference>
<dbReference type="InterPro" id="IPR002912">
    <property type="entry name" value="ACT_dom"/>
</dbReference>
<dbReference type="InterPro" id="IPR029009">
    <property type="entry name" value="ASB_dom_sf"/>
</dbReference>
<dbReference type="InterPro" id="IPR050857">
    <property type="entry name" value="D-2-hydroxyacid_DH"/>
</dbReference>
<dbReference type="InterPro" id="IPR006139">
    <property type="entry name" value="D-isomer_2_OHA_DH_cat_dom"/>
</dbReference>
<dbReference type="InterPro" id="IPR029753">
    <property type="entry name" value="D-isomer_DH_CS"/>
</dbReference>
<dbReference type="InterPro" id="IPR029752">
    <property type="entry name" value="D-isomer_DH_CS1"/>
</dbReference>
<dbReference type="InterPro" id="IPR006140">
    <property type="entry name" value="D-isomer_DH_NAD-bd"/>
</dbReference>
<dbReference type="InterPro" id="IPR036291">
    <property type="entry name" value="NAD(P)-bd_dom_sf"/>
</dbReference>
<dbReference type="InterPro" id="IPR006236">
    <property type="entry name" value="PGDH"/>
</dbReference>
<dbReference type="InterPro" id="IPR045626">
    <property type="entry name" value="PGDH_ASB_dom"/>
</dbReference>
<dbReference type="NCBIfam" id="TIGR01327">
    <property type="entry name" value="PGDH"/>
    <property type="match status" value="1"/>
</dbReference>
<dbReference type="PANTHER" id="PTHR42789">
    <property type="entry name" value="D-ISOMER SPECIFIC 2-HYDROXYACID DEHYDROGENASE FAMILY PROTEIN (AFU_ORTHOLOGUE AFUA_6G10090)"/>
    <property type="match status" value="1"/>
</dbReference>
<dbReference type="PANTHER" id="PTHR42789:SF1">
    <property type="entry name" value="D-ISOMER SPECIFIC 2-HYDROXYACID DEHYDROGENASE FAMILY PROTEIN (AFU_ORTHOLOGUE AFUA_6G10090)"/>
    <property type="match status" value="1"/>
</dbReference>
<dbReference type="Pfam" id="PF00389">
    <property type="entry name" value="2-Hacid_dh"/>
    <property type="match status" value="1"/>
</dbReference>
<dbReference type="Pfam" id="PF02826">
    <property type="entry name" value="2-Hacid_dh_C"/>
    <property type="match status" value="1"/>
</dbReference>
<dbReference type="Pfam" id="PF01842">
    <property type="entry name" value="ACT"/>
    <property type="match status" value="1"/>
</dbReference>
<dbReference type="Pfam" id="PF19304">
    <property type="entry name" value="PGDH_inter"/>
    <property type="match status" value="1"/>
</dbReference>
<dbReference type="SUPFAM" id="SSF55021">
    <property type="entry name" value="ACT-like"/>
    <property type="match status" value="1"/>
</dbReference>
<dbReference type="SUPFAM" id="SSF52283">
    <property type="entry name" value="Formate/glycerate dehydrogenase catalytic domain-like"/>
    <property type="match status" value="1"/>
</dbReference>
<dbReference type="SUPFAM" id="SSF51735">
    <property type="entry name" value="NAD(P)-binding Rossmann-fold domains"/>
    <property type="match status" value="1"/>
</dbReference>
<dbReference type="SUPFAM" id="SSF143548">
    <property type="entry name" value="Serine metabolism enzymes domain"/>
    <property type="match status" value="1"/>
</dbReference>
<dbReference type="PROSITE" id="PS51671">
    <property type="entry name" value="ACT"/>
    <property type="match status" value="1"/>
</dbReference>
<dbReference type="PROSITE" id="PS00065">
    <property type="entry name" value="D_2_HYDROXYACID_DH_1"/>
    <property type="match status" value="1"/>
</dbReference>
<dbReference type="PROSITE" id="PS00670">
    <property type="entry name" value="D_2_HYDROXYACID_DH_2"/>
    <property type="match status" value="1"/>
</dbReference>
<dbReference type="PROSITE" id="PS00671">
    <property type="entry name" value="D_2_HYDROXYACID_DH_3"/>
    <property type="match status" value="1"/>
</dbReference>
<feature type="chain" id="PRO_0000076009" description="D-3-phosphoglycerate dehydrogenase">
    <location>
        <begin position="1"/>
        <end position="524"/>
    </location>
</feature>
<feature type="domain" description="ACT" evidence="3">
    <location>
        <begin position="452"/>
        <end position="524"/>
    </location>
</feature>
<feature type="active site" evidence="1">
    <location>
        <position position="231"/>
    </location>
</feature>
<feature type="active site" evidence="1">
    <location>
        <position position="260"/>
    </location>
</feature>
<feature type="active site" description="Proton donor" evidence="1">
    <location>
        <position position="278"/>
    </location>
</feature>
<feature type="binding site" evidence="2">
    <location>
        <begin position="149"/>
        <end position="150"/>
    </location>
    <ligand>
        <name>NAD(+)</name>
        <dbReference type="ChEBI" id="CHEBI:57540"/>
    </ligand>
</feature>
<feature type="binding site" evidence="2">
    <location>
        <position position="169"/>
    </location>
    <ligand>
        <name>NAD(+)</name>
        <dbReference type="ChEBI" id="CHEBI:57540"/>
    </ligand>
</feature>
<feature type="binding site" evidence="2">
    <location>
        <begin position="229"/>
        <end position="231"/>
    </location>
    <ligand>
        <name>NAD(+)</name>
        <dbReference type="ChEBI" id="CHEBI:57540"/>
    </ligand>
</feature>
<feature type="binding site" evidence="2">
    <location>
        <position position="255"/>
    </location>
    <ligand>
        <name>NAD(+)</name>
        <dbReference type="ChEBI" id="CHEBI:57540"/>
    </ligand>
</feature>
<feature type="binding site" evidence="2">
    <location>
        <begin position="278"/>
        <end position="281"/>
    </location>
    <ligand>
        <name>NAD(+)</name>
        <dbReference type="ChEBI" id="CHEBI:57540"/>
    </ligand>
</feature>
<reference key="1">
    <citation type="journal article" date="1996" name="Science">
        <title>Complete genome sequence of the methanogenic archaeon, Methanococcus jannaschii.</title>
        <authorList>
            <person name="Bult C.J."/>
            <person name="White O."/>
            <person name="Olsen G.J."/>
            <person name="Zhou L."/>
            <person name="Fleischmann R.D."/>
            <person name="Sutton G.G."/>
            <person name="Blake J.A."/>
            <person name="FitzGerald L.M."/>
            <person name="Clayton R.A."/>
            <person name="Gocayne J.D."/>
            <person name="Kerlavage A.R."/>
            <person name="Dougherty B.A."/>
            <person name="Tomb J.-F."/>
            <person name="Adams M.D."/>
            <person name="Reich C.I."/>
            <person name="Overbeek R."/>
            <person name="Kirkness E.F."/>
            <person name="Weinstock K.G."/>
            <person name="Merrick J.M."/>
            <person name="Glodek A."/>
            <person name="Scott J.L."/>
            <person name="Geoghagen N.S.M."/>
            <person name="Weidman J.F."/>
            <person name="Fuhrmann J.L."/>
            <person name="Nguyen D."/>
            <person name="Utterback T.R."/>
            <person name="Kelley J.M."/>
            <person name="Peterson J.D."/>
            <person name="Sadow P.W."/>
            <person name="Hanna M.C."/>
            <person name="Cotton M.D."/>
            <person name="Roberts K.M."/>
            <person name="Hurst M.A."/>
            <person name="Kaine B.P."/>
            <person name="Borodovsky M."/>
            <person name="Klenk H.-P."/>
            <person name="Fraser C.M."/>
            <person name="Smith H.O."/>
            <person name="Woese C.R."/>
            <person name="Venter J.C."/>
        </authorList>
    </citation>
    <scope>NUCLEOTIDE SEQUENCE [LARGE SCALE GENOMIC DNA]</scope>
    <source>
        <strain>ATCC 43067 / DSM 2661 / JAL-1 / JCM 10045 / NBRC 100440</strain>
    </source>
</reference>
<proteinExistence type="inferred from homology"/>
<accession>Q58424</accession>
<comment type="catalytic activity">
    <reaction>
        <text>(2R)-3-phosphoglycerate + NAD(+) = 3-phosphooxypyruvate + NADH + H(+)</text>
        <dbReference type="Rhea" id="RHEA:12641"/>
        <dbReference type="ChEBI" id="CHEBI:15378"/>
        <dbReference type="ChEBI" id="CHEBI:18110"/>
        <dbReference type="ChEBI" id="CHEBI:57540"/>
        <dbReference type="ChEBI" id="CHEBI:57945"/>
        <dbReference type="ChEBI" id="CHEBI:58272"/>
        <dbReference type="EC" id="1.1.1.95"/>
    </reaction>
</comment>
<comment type="pathway">
    <text>Amino-acid biosynthesis; L-serine biosynthesis; L-serine from 3-phospho-D-glycerate: step 1/3.</text>
</comment>
<comment type="similarity">
    <text evidence="4">Belongs to the D-isomer specific 2-hydroxyacid dehydrogenase family.</text>
</comment>
<sequence length="524" mass="56924">MVKILVTDPLHEDAIKILEEVGEVEVATGLTKEELLEKIKDADVLVVRSGTKVTRDVIEKAEKLKVIGRAGVGVDNIDVEAATEKGIIVVNAPDASSISVAELTMGLMLAAARNIPQATASLKRGEWDRKRFKGIELYGKTLGVIGLGRIGQQVVKRAKAFGMNIIGYDPYIPKEVAESMGVELVDDINELCKRADFITLHVPLTPKTRHIIGREQIALMKKNAIIVNCARGGLIDEKALYEALKEGKIRAAALDVFEEEPPKDNPLLTLDNVIGTPHQGASTEEAQKAAGTIVAEQIKKVLRGELAENVVNMPNIPQEKLGKLKPYMLLAEMLGNIVMQVLDGSVNRVELIYSGELAKEKTDLIKRAFLKGLLSPILLAGINLVNAPIIAKNRNINVVESSTSEEKYGNAIKITAESDKKKFSIVGAIINNKPVILEVDGYEVSFIPEGVLAIIKHIDRPGTIGRVCITLGDYGINIASMQVGRKEPGGESVMLLNLDHTVPEEVIEKIKEIPNIKDVAVINL</sequence>
<organism>
    <name type="scientific">Methanocaldococcus jannaschii (strain ATCC 43067 / DSM 2661 / JAL-1 / JCM 10045 / NBRC 100440)</name>
    <name type="common">Methanococcus jannaschii</name>
    <dbReference type="NCBI Taxonomy" id="243232"/>
    <lineage>
        <taxon>Archaea</taxon>
        <taxon>Methanobacteriati</taxon>
        <taxon>Methanobacteriota</taxon>
        <taxon>Methanomada group</taxon>
        <taxon>Methanococci</taxon>
        <taxon>Methanococcales</taxon>
        <taxon>Methanocaldococcaceae</taxon>
        <taxon>Methanocaldococcus</taxon>
    </lineage>
</organism>
<evidence type="ECO:0000250" key="1"/>
<evidence type="ECO:0000250" key="2">
    <source>
        <dbReference type="UniProtKB" id="P0A9T0"/>
    </source>
</evidence>
<evidence type="ECO:0000255" key="3">
    <source>
        <dbReference type="PROSITE-ProRule" id="PRU01007"/>
    </source>
</evidence>
<evidence type="ECO:0000305" key="4"/>
<keyword id="KW-0028">Amino-acid biosynthesis</keyword>
<keyword id="KW-0520">NAD</keyword>
<keyword id="KW-0560">Oxidoreductase</keyword>
<keyword id="KW-1185">Reference proteome</keyword>
<keyword id="KW-0718">Serine biosynthesis</keyword>
<gene>
    <name type="primary">serA</name>
    <name type="ordered locus">MJ1018</name>
</gene>